<reference key="1">
    <citation type="journal article" date="2009" name="J. Bacteriol.">
        <title>Complete genome sequence of Erythrobacter litoralis HTCC2594.</title>
        <authorList>
            <person name="Oh H.M."/>
            <person name="Giovannoni S.J."/>
            <person name="Ferriera S."/>
            <person name="Johnson J."/>
            <person name="Cho J.C."/>
        </authorList>
    </citation>
    <scope>NUCLEOTIDE SEQUENCE [LARGE SCALE GENOMIC DNA]</scope>
    <source>
        <strain>HTCC2594</strain>
    </source>
</reference>
<evidence type="ECO:0000255" key="1">
    <source>
        <dbReference type="HAMAP-Rule" id="MF_00086"/>
    </source>
</evidence>
<sequence length="403" mass="43297">MRSTYLFTSESVSEGHPDKVSDQISDAIVDLFIGKDPEARVACETLTTTERVILAGEIRGQGIMDTDGNWAPGIEDEIEAAVRQTVKEIGYEQDGFHWETLTFENHLHGQSAHIAQGVDASGNKDEGAGDQGIMFGFACDETPDLMPAPIDYSHKILHRLATDRKNGNAPFLEPDSKSQVTLRYENGKPVACTAVVVSTQHGAGYDEGEKEAELRAYVKRVVADILPDGFLSDATKWHINPTGTFVIGGPDGDAGLTGRKIIVDTYGGAAPHGGGAFSGKDPTKVDRSAAYITRYLAKNVVAAGLATRCTIQIAYAIGVSQPLSLYVDTHGTGTVDDAAIEEAILDIEKLGGLTPRAIRTHLGLNKPIYRVSAAYGHFGRTAEGDRFPWERTDLVEDLKAALA</sequence>
<comment type="function">
    <text evidence="1">Catalyzes the formation of S-adenosylmethionine (AdoMet) from methionine and ATP. The overall synthetic reaction is composed of two sequential steps, AdoMet formation and the subsequent tripolyphosphate hydrolysis which occurs prior to release of AdoMet from the enzyme.</text>
</comment>
<comment type="catalytic activity">
    <reaction evidence="1">
        <text>L-methionine + ATP + H2O = S-adenosyl-L-methionine + phosphate + diphosphate</text>
        <dbReference type="Rhea" id="RHEA:21080"/>
        <dbReference type="ChEBI" id="CHEBI:15377"/>
        <dbReference type="ChEBI" id="CHEBI:30616"/>
        <dbReference type="ChEBI" id="CHEBI:33019"/>
        <dbReference type="ChEBI" id="CHEBI:43474"/>
        <dbReference type="ChEBI" id="CHEBI:57844"/>
        <dbReference type="ChEBI" id="CHEBI:59789"/>
        <dbReference type="EC" id="2.5.1.6"/>
    </reaction>
</comment>
<comment type="cofactor">
    <cofactor evidence="1">
        <name>Mg(2+)</name>
        <dbReference type="ChEBI" id="CHEBI:18420"/>
    </cofactor>
    <text evidence="1">Binds 2 divalent ions per subunit.</text>
</comment>
<comment type="cofactor">
    <cofactor evidence="1">
        <name>K(+)</name>
        <dbReference type="ChEBI" id="CHEBI:29103"/>
    </cofactor>
    <text evidence="1">Binds 1 potassium ion per subunit.</text>
</comment>
<comment type="pathway">
    <text evidence="1">Amino-acid biosynthesis; S-adenosyl-L-methionine biosynthesis; S-adenosyl-L-methionine from L-methionine: step 1/1.</text>
</comment>
<comment type="subunit">
    <text evidence="1">Homotetramer; dimer of dimers.</text>
</comment>
<comment type="subcellular location">
    <subcellularLocation>
        <location evidence="1">Cytoplasm</location>
    </subcellularLocation>
</comment>
<comment type="similarity">
    <text evidence="1">Belongs to the AdoMet synthase family.</text>
</comment>
<feature type="chain" id="PRO_0000302911" description="S-adenosylmethionine synthase">
    <location>
        <begin position="1"/>
        <end position="403"/>
    </location>
</feature>
<feature type="region of interest" description="Flexible loop" evidence="1">
    <location>
        <begin position="110"/>
        <end position="120"/>
    </location>
</feature>
<feature type="binding site" description="in other chain" evidence="1">
    <location>
        <position position="16"/>
    </location>
    <ligand>
        <name>ATP</name>
        <dbReference type="ChEBI" id="CHEBI:30616"/>
        <note>ligand shared between two neighboring subunits</note>
    </ligand>
</feature>
<feature type="binding site" evidence="1">
    <location>
        <position position="18"/>
    </location>
    <ligand>
        <name>Mg(2+)</name>
        <dbReference type="ChEBI" id="CHEBI:18420"/>
    </ligand>
</feature>
<feature type="binding site" evidence="1">
    <location>
        <position position="44"/>
    </location>
    <ligand>
        <name>K(+)</name>
        <dbReference type="ChEBI" id="CHEBI:29103"/>
    </ligand>
</feature>
<feature type="binding site" description="in other chain" evidence="1">
    <location>
        <position position="57"/>
    </location>
    <ligand>
        <name>L-methionine</name>
        <dbReference type="ChEBI" id="CHEBI:57844"/>
        <note>ligand shared between two neighboring subunits</note>
    </ligand>
</feature>
<feature type="binding site" description="in other chain" evidence="1">
    <location>
        <position position="110"/>
    </location>
    <ligand>
        <name>L-methionine</name>
        <dbReference type="ChEBI" id="CHEBI:57844"/>
        <note>ligand shared between two neighboring subunits</note>
    </ligand>
</feature>
<feature type="binding site" description="in other chain" evidence="1">
    <location>
        <begin position="175"/>
        <end position="177"/>
    </location>
    <ligand>
        <name>ATP</name>
        <dbReference type="ChEBI" id="CHEBI:30616"/>
        <note>ligand shared between two neighboring subunits</note>
    </ligand>
</feature>
<feature type="binding site" evidence="1">
    <location>
        <position position="253"/>
    </location>
    <ligand>
        <name>ATP</name>
        <dbReference type="ChEBI" id="CHEBI:30616"/>
        <note>ligand shared between two neighboring subunits</note>
    </ligand>
</feature>
<feature type="binding site" evidence="1">
    <location>
        <position position="253"/>
    </location>
    <ligand>
        <name>L-methionine</name>
        <dbReference type="ChEBI" id="CHEBI:57844"/>
        <note>ligand shared between two neighboring subunits</note>
    </ligand>
</feature>
<feature type="binding site" description="in other chain" evidence="1">
    <location>
        <begin position="259"/>
        <end position="260"/>
    </location>
    <ligand>
        <name>ATP</name>
        <dbReference type="ChEBI" id="CHEBI:30616"/>
        <note>ligand shared between two neighboring subunits</note>
    </ligand>
</feature>
<feature type="binding site" evidence="1">
    <location>
        <position position="276"/>
    </location>
    <ligand>
        <name>ATP</name>
        <dbReference type="ChEBI" id="CHEBI:30616"/>
        <note>ligand shared between two neighboring subunits</note>
    </ligand>
</feature>
<feature type="binding site" evidence="1">
    <location>
        <position position="280"/>
    </location>
    <ligand>
        <name>ATP</name>
        <dbReference type="ChEBI" id="CHEBI:30616"/>
        <note>ligand shared between two neighboring subunits</note>
    </ligand>
</feature>
<feature type="binding site" description="in other chain" evidence="1">
    <location>
        <position position="284"/>
    </location>
    <ligand>
        <name>L-methionine</name>
        <dbReference type="ChEBI" id="CHEBI:57844"/>
        <note>ligand shared between two neighboring subunits</note>
    </ligand>
</feature>
<protein>
    <recommendedName>
        <fullName evidence="1">S-adenosylmethionine synthase</fullName>
        <shortName evidence="1">AdoMet synthase</shortName>
        <ecNumber evidence="1">2.5.1.6</ecNumber>
    </recommendedName>
    <alternativeName>
        <fullName evidence="1">MAT</fullName>
    </alternativeName>
    <alternativeName>
        <fullName evidence="1">Methionine adenosyltransferase</fullName>
    </alternativeName>
</protein>
<gene>
    <name evidence="1" type="primary">metK</name>
    <name type="ordered locus">ELI_14285</name>
</gene>
<accession>Q2N5U2</accession>
<proteinExistence type="inferred from homology"/>
<keyword id="KW-0067">ATP-binding</keyword>
<keyword id="KW-0963">Cytoplasm</keyword>
<keyword id="KW-0460">Magnesium</keyword>
<keyword id="KW-0479">Metal-binding</keyword>
<keyword id="KW-0547">Nucleotide-binding</keyword>
<keyword id="KW-0554">One-carbon metabolism</keyword>
<keyword id="KW-0630">Potassium</keyword>
<keyword id="KW-1185">Reference proteome</keyword>
<keyword id="KW-0808">Transferase</keyword>
<organism>
    <name type="scientific">Erythrobacter litoralis (strain HTCC2594)</name>
    <dbReference type="NCBI Taxonomy" id="314225"/>
    <lineage>
        <taxon>Bacteria</taxon>
        <taxon>Pseudomonadati</taxon>
        <taxon>Pseudomonadota</taxon>
        <taxon>Alphaproteobacteria</taxon>
        <taxon>Sphingomonadales</taxon>
        <taxon>Erythrobacteraceae</taxon>
        <taxon>Erythrobacter/Porphyrobacter group</taxon>
        <taxon>Erythrobacter</taxon>
    </lineage>
</organism>
<name>METK_ERYLH</name>
<dbReference type="EC" id="2.5.1.6" evidence="1"/>
<dbReference type="EMBL" id="CP000157">
    <property type="protein sequence ID" value="ABC64949.1"/>
    <property type="molecule type" value="Genomic_DNA"/>
</dbReference>
<dbReference type="RefSeq" id="WP_011415771.1">
    <property type="nucleotide sequence ID" value="NC_007722.1"/>
</dbReference>
<dbReference type="SMR" id="Q2N5U2"/>
<dbReference type="STRING" id="314225.ELI_14285"/>
<dbReference type="KEGG" id="eli:ELI_14285"/>
<dbReference type="eggNOG" id="COG0192">
    <property type="taxonomic scope" value="Bacteria"/>
</dbReference>
<dbReference type="HOGENOM" id="CLU_041802_1_1_5"/>
<dbReference type="OrthoDB" id="9801686at2"/>
<dbReference type="UniPathway" id="UPA00315">
    <property type="reaction ID" value="UER00080"/>
</dbReference>
<dbReference type="Proteomes" id="UP000008808">
    <property type="component" value="Chromosome"/>
</dbReference>
<dbReference type="GO" id="GO:0005737">
    <property type="term" value="C:cytoplasm"/>
    <property type="evidence" value="ECO:0007669"/>
    <property type="project" value="UniProtKB-SubCell"/>
</dbReference>
<dbReference type="GO" id="GO:0005524">
    <property type="term" value="F:ATP binding"/>
    <property type="evidence" value="ECO:0007669"/>
    <property type="project" value="UniProtKB-UniRule"/>
</dbReference>
<dbReference type="GO" id="GO:0000287">
    <property type="term" value="F:magnesium ion binding"/>
    <property type="evidence" value="ECO:0007669"/>
    <property type="project" value="UniProtKB-UniRule"/>
</dbReference>
<dbReference type="GO" id="GO:0004478">
    <property type="term" value="F:methionine adenosyltransferase activity"/>
    <property type="evidence" value="ECO:0007669"/>
    <property type="project" value="UniProtKB-UniRule"/>
</dbReference>
<dbReference type="GO" id="GO:0006730">
    <property type="term" value="P:one-carbon metabolic process"/>
    <property type="evidence" value="ECO:0007669"/>
    <property type="project" value="UniProtKB-KW"/>
</dbReference>
<dbReference type="GO" id="GO:0006556">
    <property type="term" value="P:S-adenosylmethionine biosynthetic process"/>
    <property type="evidence" value="ECO:0007669"/>
    <property type="project" value="UniProtKB-UniRule"/>
</dbReference>
<dbReference type="CDD" id="cd18079">
    <property type="entry name" value="S-AdoMet_synt"/>
    <property type="match status" value="1"/>
</dbReference>
<dbReference type="FunFam" id="3.30.300.10:FF:000003">
    <property type="entry name" value="S-adenosylmethionine synthase"/>
    <property type="match status" value="1"/>
</dbReference>
<dbReference type="Gene3D" id="3.30.300.10">
    <property type="match status" value="3"/>
</dbReference>
<dbReference type="HAMAP" id="MF_00086">
    <property type="entry name" value="S_AdoMet_synth1"/>
    <property type="match status" value="1"/>
</dbReference>
<dbReference type="InterPro" id="IPR022631">
    <property type="entry name" value="ADOMET_SYNTHASE_CS"/>
</dbReference>
<dbReference type="InterPro" id="IPR022630">
    <property type="entry name" value="S-AdoMet_synt_C"/>
</dbReference>
<dbReference type="InterPro" id="IPR022629">
    <property type="entry name" value="S-AdoMet_synt_central"/>
</dbReference>
<dbReference type="InterPro" id="IPR022628">
    <property type="entry name" value="S-AdoMet_synt_N"/>
</dbReference>
<dbReference type="InterPro" id="IPR002133">
    <property type="entry name" value="S-AdoMet_synthetase"/>
</dbReference>
<dbReference type="InterPro" id="IPR022636">
    <property type="entry name" value="S-AdoMet_synthetase_sfam"/>
</dbReference>
<dbReference type="NCBIfam" id="TIGR01034">
    <property type="entry name" value="metK"/>
    <property type="match status" value="1"/>
</dbReference>
<dbReference type="PANTHER" id="PTHR11964">
    <property type="entry name" value="S-ADENOSYLMETHIONINE SYNTHETASE"/>
    <property type="match status" value="1"/>
</dbReference>
<dbReference type="Pfam" id="PF02773">
    <property type="entry name" value="S-AdoMet_synt_C"/>
    <property type="match status" value="1"/>
</dbReference>
<dbReference type="Pfam" id="PF02772">
    <property type="entry name" value="S-AdoMet_synt_M"/>
    <property type="match status" value="1"/>
</dbReference>
<dbReference type="Pfam" id="PF00438">
    <property type="entry name" value="S-AdoMet_synt_N"/>
    <property type="match status" value="1"/>
</dbReference>
<dbReference type="PIRSF" id="PIRSF000497">
    <property type="entry name" value="MAT"/>
    <property type="match status" value="1"/>
</dbReference>
<dbReference type="SUPFAM" id="SSF55973">
    <property type="entry name" value="S-adenosylmethionine synthetase"/>
    <property type="match status" value="3"/>
</dbReference>
<dbReference type="PROSITE" id="PS00376">
    <property type="entry name" value="ADOMET_SYNTHASE_1"/>
    <property type="match status" value="1"/>
</dbReference>
<dbReference type="PROSITE" id="PS00377">
    <property type="entry name" value="ADOMET_SYNTHASE_2"/>
    <property type="match status" value="1"/>
</dbReference>